<organism evidence="13">
    <name type="scientific">Campylobacter jejuni subsp. jejuni serotype O:23/36 (strain 81-176)</name>
    <dbReference type="NCBI Taxonomy" id="354242"/>
    <lineage>
        <taxon>Bacteria</taxon>
        <taxon>Pseudomonadati</taxon>
        <taxon>Campylobacterota</taxon>
        <taxon>Epsilonproteobacteria</taxon>
        <taxon>Campylobacterales</taxon>
        <taxon>Campylobacteraceae</taxon>
        <taxon>Campylobacter</taxon>
    </lineage>
</organism>
<gene>
    <name evidence="9 10 11 13" type="primary">tlyA</name>
    <name evidence="13" type="ordered locus">CJJ81176_0616</name>
</gene>
<keyword id="KW-0489">Methyltransferase</keyword>
<keyword id="KW-0694">RNA-binding</keyword>
<keyword id="KW-0698">rRNA processing</keyword>
<keyword id="KW-0949">S-adenosyl-L-methionine</keyword>
<keyword id="KW-0808">Transferase</keyword>
<keyword id="KW-0843">Virulence</keyword>
<proteinExistence type="evidence at protein level"/>
<comment type="function">
    <text evidence="2 3 4 5 6">Catalyzes the 2'-O-methylation at nucleotide C1920 in 23S rRNA (PubMed:24796671, PubMed:29404277). Enhances motility (PubMed:24796671, PubMed:29404277, PubMed:32134554). Enhances biofilm formation (PubMed:29404277, PubMed:32134554). Involved in the assembly of 70S ribosomes (PubMed:24796671). Involved in virulence by promoting adherence and invasion to host cells (PubMed:18389311, PubMed:23971210, PubMed:32134554). Involved in pathogenicity by modulating secretion of host-protective chemokine interleukin 8 (IL-8) (PubMed:32134554). Involved in susceptibility to antibiotic capreomycin (PubMed:24796671, PubMed:32134554).</text>
</comment>
<comment type="catalytic activity">
    <reaction evidence="4 5">
        <text>cytidine(1920) in 23S rRNA + S-adenosyl-L-methionine = 2'-O-methylcytidine(1920) in 23S rRNA + S-adenosyl-L-homocysteine + H(+)</text>
        <dbReference type="Rhea" id="RHEA:43200"/>
        <dbReference type="Rhea" id="RHEA-COMP:10403"/>
        <dbReference type="Rhea" id="RHEA-COMP:10404"/>
        <dbReference type="ChEBI" id="CHEBI:15378"/>
        <dbReference type="ChEBI" id="CHEBI:57856"/>
        <dbReference type="ChEBI" id="CHEBI:59789"/>
        <dbReference type="ChEBI" id="CHEBI:74495"/>
        <dbReference type="ChEBI" id="CHEBI:82748"/>
        <dbReference type="EC" id="2.1.1.226"/>
    </reaction>
    <physiologicalReaction direction="left-to-right" evidence="4 5">
        <dbReference type="Rhea" id="RHEA:43201"/>
    </physiologicalReaction>
</comment>
<comment type="biophysicochemical properties">
    <kinetics>
        <KM evidence="4">4.8 uM for 50S ribosomal subunit (at pH 7.5 and 37 degrees Celsius)</KM>
        <KM evidence="4">5.8 uM for S-adenosyl-L-methionine (at pH 7.5 and 37 degrees Celsius)</KM>
        <text evidence="4">kcat is 0.0048 min(-1) for 50S ribosomal subunit. kcat is 0.0044 min(-1) for S-adenosyl-L-methionine.</text>
    </kinetics>
    <temperatureDependence>
        <text evidence="4">High methylation activity of the 50S ribosomal subunit at 37 degrees Celsius. Loss of activity at 42 degrees Celsius.</text>
    </temperatureDependence>
</comment>
<comment type="disruption phenotype">
    <text evidence="2 3 4 5 6">Cells lacking this gene have no 2'-O-methylation activity at nucleotide C1920 in 23S rRNA (PubMed:29404277). Impeded motility (PubMed:24796671, PubMed:29404277, PubMed:32134554). Impaired biofilm formation (PubMed:29404277, PubMed:32134554). Cells form clumps which lack the structural roughness seen in the wild-type. The cells are less bulky, but otherwise they have no obvious alteration in dimensions, shape or flagellar structure (PubMed:29404277). Accumulation of 50S ribosomal subunits and reduced amount of functional 70S ribosomes (PubMed:24796671). Reduced adherence to the surface of Caco-2 human intestinal epithelial cells and impaired capacity to invade them (PubMed:18389311, PubMed:23971210, PubMed:32134554). Reduced interleukin 8 (IL-8) chemokine secretion by the Caco-2 cells. Impaired adhesion and invasion to RAW264.7 murine macrophage cells, but no effect on survival within the macrophages as both the wild-type and mutant cells are killed within 48 hours (PubMed:32134554). Resistant to capreomycin indicated by increased minimal inhibitory concentration (MIC) value (PubMed:24796671, PubMed:32134554). No difference in hemolytic activity between the mutant and the wild-type (PubMed:18389311).</text>
</comment>
<comment type="similarity">
    <text evidence="12">Belongs to the TlyA family.</text>
</comment>
<protein>
    <recommendedName>
        <fullName evidence="10">23S rRNA (cytidine-2'-O)-methyltransferase TlyA</fullName>
        <ecNumber evidence="4 5">2.1.1.226</ecNumber>
    </recommendedName>
    <alternativeName>
        <fullName evidence="10">23S rRNA (cytidine1920-2'-O)-methyltransferase</fullName>
    </alternativeName>
    <alternativeName>
        <fullName evidence="13">Hemolysin A</fullName>
    </alternativeName>
</protein>
<dbReference type="EC" id="2.1.1.226" evidence="4 5"/>
<dbReference type="EMBL" id="CP000538">
    <property type="protein sequence ID" value="EAQ73153.1"/>
    <property type="molecule type" value="Genomic_DNA"/>
</dbReference>
<dbReference type="RefSeq" id="WP_002868894.1">
    <property type="nucleotide sequence ID" value="NC_008787.1"/>
</dbReference>
<dbReference type="SMR" id="A0A0H3PEK7"/>
<dbReference type="KEGG" id="cjj:CJJ81176_0616"/>
<dbReference type="eggNOG" id="COG1189">
    <property type="taxonomic scope" value="Bacteria"/>
</dbReference>
<dbReference type="HOGENOM" id="CLU_058015_1_0_7"/>
<dbReference type="Proteomes" id="UP000000646">
    <property type="component" value="Chromosome"/>
</dbReference>
<dbReference type="GO" id="GO:0003723">
    <property type="term" value="F:RNA binding"/>
    <property type="evidence" value="ECO:0007669"/>
    <property type="project" value="UniProtKB-KW"/>
</dbReference>
<dbReference type="GO" id="GO:0008649">
    <property type="term" value="F:rRNA methyltransferase activity"/>
    <property type="evidence" value="ECO:0000314"/>
    <property type="project" value="UniProtKB"/>
</dbReference>
<dbReference type="GO" id="GO:0048870">
    <property type="term" value="P:cell motility"/>
    <property type="evidence" value="ECO:0000315"/>
    <property type="project" value="UniProtKB"/>
</dbReference>
<dbReference type="GO" id="GO:0071236">
    <property type="term" value="P:cellular response to antibiotic"/>
    <property type="evidence" value="ECO:0000315"/>
    <property type="project" value="UniProtKB"/>
</dbReference>
<dbReference type="GO" id="GO:0042256">
    <property type="term" value="P:cytosolic ribosome assembly"/>
    <property type="evidence" value="ECO:0000315"/>
    <property type="project" value="UniProtKB"/>
</dbReference>
<dbReference type="GO" id="GO:0000451">
    <property type="term" value="P:rRNA 2'-O-methylation"/>
    <property type="evidence" value="ECO:0000314"/>
    <property type="project" value="UniProtKB"/>
</dbReference>
<dbReference type="GO" id="GO:0016032">
    <property type="term" value="P:viral process"/>
    <property type="evidence" value="ECO:0000315"/>
    <property type="project" value="UniProtKB"/>
</dbReference>
<dbReference type="Gene3D" id="3.10.290.10">
    <property type="entry name" value="RNA-binding S4 domain"/>
    <property type="match status" value="1"/>
</dbReference>
<dbReference type="Gene3D" id="3.40.50.150">
    <property type="entry name" value="Vaccinia Virus protein VP39"/>
    <property type="match status" value="1"/>
</dbReference>
<dbReference type="InterPro" id="IPR002877">
    <property type="entry name" value="RNA_MeTrfase_FtsJ_dom"/>
</dbReference>
<dbReference type="InterPro" id="IPR036986">
    <property type="entry name" value="S4_RNA-bd_sf"/>
</dbReference>
<dbReference type="InterPro" id="IPR029063">
    <property type="entry name" value="SAM-dependent_MTases_sf"/>
</dbReference>
<dbReference type="InterPro" id="IPR047048">
    <property type="entry name" value="TlyA"/>
</dbReference>
<dbReference type="PANTHER" id="PTHR32319">
    <property type="entry name" value="BACTERIAL HEMOLYSIN-LIKE PROTEIN"/>
    <property type="match status" value="1"/>
</dbReference>
<dbReference type="PANTHER" id="PTHR32319:SF0">
    <property type="entry name" value="BACTERIAL HEMOLYSIN-LIKE PROTEIN"/>
    <property type="match status" value="1"/>
</dbReference>
<dbReference type="Pfam" id="PF01728">
    <property type="entry name" value="FtsJ"/>
    <property type="match status" value="1"/>
</dbReference>
<dbReference type="SUPFAM" id="SSF55174">
    <property type="entry name" value="Alpha-L RNA-binding motif"/>
    <property type="match status" value="1"/>
</dbReference>
<dbReference type="SUPFAM" id="SSF53335">
    <property type="entry name" value="S-adenosyl-L-methionine-dependent methyltransferases"/>
    <property type="match status" value="1"/>
</dbReference>
<dbReference type="PROSITE" id="PS50889">
    <property type="entry name" value="S4"/>
    <property type="match status" value="1"/>
</dbReference>
<name>TLYA_CAMJJ</name>
<reference evidence="14" key="1">
    <citation type="submission" date="2006-12" db="EMBL/GenBank/DDBJ databases">
        <authorList>
            <person name="Fouts D.E."/>
            <person name="Nelson K.E."/>
            <person name="Sebastian Y."/>
        </authorList>
    </citation>
    <scope>NUCLEOTIDE SEQUENCE [LARGE SCALE GENOMIC DNA]</scope>
    <source>
        <strain evidence="14">81-176</strain>
    </source>
</reference>
<reference key="2">
    <citation type="journal article" date="2008" name="Curr. Microbiol.">
        <title>Functional analysis of the Campylobacter jejuni cj0183 and cj0588 genes.</title>
        <authorList>
            <person name="Salamaszynska-Guz A."/>
            <person name="Klimuszko D."/>
        </authorList>
    </citation>
    <scope>FUNCTION</scope>
    <scope>DISRUPTION PHENOTYPE</scope>
    <source>
        <strain evidence="7">81-176</strain>
    </source>
</reference>
<reference key="3">
    <citation type="journal article" date="2013" name="Pol. J. Vet. Sci.">
        <title>Influence of mutation in cj0183 and cj0588 genes for colonization abilities of Campylobacter jejuni in Caco-2 cells using confocal laser scanning microscope.</title>
        <authorList>
            <person name="Salamaszynska-Guz A."/>
            <person name="Godlewski M.M."/>
            <person name="Klimuszko D."/>
        </authorList>
    </citation>
    <scope>FUNCTION</scope>
    <scope>DISRUPTION PHENOTYPE</scope>
    <source>
        <strain evidence="8">81-176</strain>
    </source>
</reference>
<reference key="4">
    <citation type="journal article" date="2014" name="Biochem. Biophys. Res. Commun.">
        <title>The Cj0588 protein is a Campylobacter jejuni RNA methyltransferase.</title>
        <authorList>
            <person name="Salamaszynska-Guz A."/>
            <person name="Taciak B."/>
            <person name="Kwiatek A."/>
            <person name="Klimuszko D."/>
        </authorList>
    </citation>
    <scope>FUNCTION</scope>
    <scope>CATALYTIC ACTIVITY</scope>
    <scope>BIOPHYSICOCHEMICAL PROPERTIES</scope>
    <scope>DISRUPTION PHENOTYPE</scope>
    <scope>3D-STRUCTURE MODELING</scope>
    <source>
        <strain evidence="9">81-176</strain>
    </source>
</reference>
<reference key="5">
    <citation type="journal article" date="2017" name="Front. Cell. Infect. Microbiol.">
        <title>Biofilm Formation and Motility Are Promoted by Cj0588-Directed Methylation of rRNA in Campylobacter jejuni.</title>
        <authorList>
            <person name="Salamaszynska-Guz A."/>
            <person name="Rose S."/>
            <person name="Lykkebo C.A."/>
            <person name="Taciak B."/>
            <person name="Bacal P."/>
            <person name="Uspienski T."/>
            <person name="Douthwaite S."/>
        </authorList>
    </citation>
    <scope>FUNCTION</scope>
    <scope>CATALYTIC ACTIVITY</scope>
    <scope>DISRUPTION PHENOTYPE</scope>
    <scope>MUTAGENESIS OF LYS-80; ASP-162 AND LYS-188</scope>
    <scope>3D-STRUCTURE MODELING OF THE CATALYTIC DOMAIN</scope>
    <source>
        <strain evidence="10">81-176</strain>
    </source>
</reference>
<reference key="6">
    <citation type="journal article" date="2020" name="Cell. Microbiol.">
        <title>Virulence properties of Campylobacter jejuni are enhanced by displaying a mycobacterial TlyA methylation pattern in its rRNA.</title>
        <authorList>
            <person name="Salamaszynska-Guz A."/>
            <person name="Serafinska I."/>
            <person name="Bacal P."/>
            <person name="Douthwaite S."/>
        </authorList>
    </citation>
    <scope>FUNCTION</scope>
    <scope>DISRUPTION PHENOTYPE</scope>
    <scope>MUTAGENESIS OF LYS-188</scope>
    <source>
        <strain evidence="11">81-176</strain>
    </source>
</reference>
<sequence>MRFDFFVSKRLNISRNKALELIENEEVLLNGKSFKASFDVKNFLENLKKTQDLNPEDILLTDGLKLDLLSEIYVSRAALKLKNFLEENGIEIKHKNCLDIGSSTGGFVQILLENQALKITALDVGNNQLHLSLRTNEKIILHENTDLRTFKSEEKFELITCDVSFISLINLLYYIDNLALKEIILLFKPQFEVGKNIKRDKKGVLKDDKAILKARMDFEKACAKLGWLLKNTQKSSIKGKEGNVEYFYYYIKN</sequence>
<feature type="chain" id="PRO_0000454899" description="23S rRNA (cytidine-2'-O)-methyltransferase TlyA">
    <location>
        <begin position="1"/>
        <end position="253"/>
    </location>
</feature>
<feature type="domain" description="S4 RNA-binding" evidence="1">
    <location>
        <begin position="1"/>
        <end position="73"/>
    </location>
</feature>
<feature type="mutagenesis site" description="Loss of 2'-O-methylation activity at nucleotide C1920 in 23S rRNA. Reduced motility and impaired biofilm formation." evidence="5">
    <original>K</original>
    <variation>A</variation>
    <location>
        <position position="80"/>
    </location>
</feature>
<feature type="mutagenesis site" description="Loss of 2'-O-methylation activity at nucleotide C1920 in 23S rRNA. Reduced motility and impaired biofilm formation." evidence="5">
    <original>D</original>
    <variation>A</variation>
    <location>
        <position position="162"/>
    </location>
</feature>
<feature type="mutagenesis site" description="Loss of 2'-O-methylation activity at nucleotide C1920 in 23S rRNA. Reduced motility and impaired biofilm formation. Reduced adherence to the surface of Caco-2 human intestinal epithelial cells and impaired capacity to invade them. Reduced interleukin 8 (IL-8) chemokine secretion by the Caco-2 cells. Impaired adhesion and invasion to RAW264.7 murine macrophage cells, but no effect on survival rates within the macrophages. Increased minimal inhibitory concentration (MIC) value for capreomycin." evidence="5 6">
    <original>K</original>
    <variation>A</variation>
    <location>
        <position position="188"/>
    </location>
</feature>
<evidence type="ECO:0000255" key="1">
    <source>
        <dbReference type="PROSITE-ProRule" id="PRU00182"/>
    </source>
</evidence>
<evidence type="ECO:0000269" key="2">
    <source>
    </source>
</evidence>
<evidence type="ECO:0000269" key="3">
    <source>
    </source>
</evidence>
<evidence type="ECO:0000269" key="4">
    <source>
    </source>
</evidence>
<evidence type="ECO:0000269" key="5">
    <source>
    </source>
</evidence>
<evidence type="ECO:0000269" key="6">
    <source>
    </source>
</evidence>
<evidence type="ECO:0000303" key="7">
    <source>
    </source>
</evidence>
<evidence type="ECO:0000303" key="8">
    <source>
    </source>
</evidence>
<evidence type="ECO:0000303" key="9">
    <source>
    </source>
</evidence>
<evidence type="ECO:0000303" key="10">
    <source>
    </source>
</evidence>
<evidence type="ECO:0000303" key="11">
    <source>
    </source>
</evidence>
<evidence type="ECO:0000305" key="12"/>
<evidence type="ECO:0000312" key="13">
    <source>
        <dbReference type="EMBL" id="EAQ73153.1"/>
    </source>
</evidence>
<evidence type="ECO:0000312" key="14">
    <source>
        <dbReference type="Proteomes" id="UP000000646"/>
    </source>
</evidence>
<accession>A0A0H3PEK7</accession>